<accession>P0DTM2</accession>
<proteinExistence type="evidence at protein level"/>
<organism>
    <name type="scientific">Rana cascadae</name>
    <name type="common">Cascades frog</name>
    <dbReference type="NCBI Taxonomy" id="160497"/>
    <lineage>
        <taxon>Eukaryota</taxon>
        <taxon>Metazoa</taxon>
        <taxon>Chordata</taxon>
        <taxon>Craniata</taxon>
        <taxon>Vertebrata</taxon>
        <taxon>Euteleostomi</taxon>
        <taxon>Amphibia</taxon>
        <taxon>Batrachia</taxon>
        <taxon>Anura</taxon>
        <taxon>Neobatrachia</taxon>
        <taxon>Ranoidea</taxon>
        <taxon>Ranidae</taxon>
        <taxon>Rana</taxon>
        <taxon>Rana</taxon>
    </lineage>
</organism>
<keyword id="KW-0027">Amidation</keyword>
<keyword id="KW-0878">Amphibian defense peptide</keyword>
<keyword id="KW-0044">Antibiotic</keyword>
<keyword id="KW-0929">Antimicrobial</keyword>
<keyword id="KW-0903">Direct protein sequencing</keyword>
<keyword id="KW-0391">Immunity</keyword>
<keyword id="KW-0399">Innate immunity</keyword>
<keyword id="KW-0472">Membrane</keyword>
<keyword id="KW-0964">Secreted</keyword>
<keyword id="KW-1052">Target cell membrane</keyword>
<keyword id="KW-1053">Target membrane</keyword>
<evidence type="ECO:0000269" key="1">
    <source>
    </source>
</evidence>
<evidence type="ECO:0000303" key="2">
    <source>
    </source>
</evidence>
<evidence type="ECO:0000305" key="3"/>
<evidence type="ECO:0000305" key="4">
    <source>
    </source>
</evidence>
<reference key="1">
    <citation type="journal article" date="2007" name="Peptides">
        <title>Peptide defenses of the Cascades frog Rana cascadae: implications for the evolutionary history of frogs of the Amerana species group.</title>
        <authorList>
            <person name="Conlon J.M."/>
            <person name="Al-Dhaheri A."/>
            <person name="Al-Mutawa E."/>
            <person name="Al-Kharrge R."/>
            <person name="Ahmed E."/>
            <person name="Kolodziejek J."/>
            <person name="Nowotny N."/>
            <person name="Nielsen P.F."/>
            <person name="Davidson C."/>
        </authorList>
    </citation>
    <scope>PROTEIN SEQUENCE</scope>
    <scope>SUBCELLULAR LOCATION</scope>
    <scope>FUNCTION</scope>
    <scope>MASS SPECTROMETRY</scope>
    <scope>AMIDATION AT LEU-13</scope>
    <source>
        <tissue>Skin secretion</tissue>
    </source>
</reference>
<name>TP1C_RANCS</name>
<sequence>FLPLVTGLLSGLL</sequence>
<feature type="peptide" id="PRO_0000457127" description="Temporin-1CSc" evidence="1">
    <location>
        <begin position="1"/>
        <end position="13"/>
    </location>
</feature>
<feature type="modified residue" description="Leucine amide" evidence="1">
    <location>
        <position position="13"/>
    </location>
</feature>
<protein>
    <recommendedName>
        <fullName evidence="2">Temporin-1CSc</fullName>
    </recommendedName>
</protein>
<dbReference type="GO" id="GO:0005576">
    <property type="term" value="C:extracellular region"/>
    <property type="evidence" value="ECO:0007669"/>
    <property type="project" value="UniProtKB-SubCell"/>
</dbReference>
<dbReference type="GO" id="GO:0016020">
    <property type="term" value="C:membrane"/>
    <property type="evidence" value="ECO:0007669"/>
    <property type="project" value="UniProtKB-KW"/>
</dbReference>
<dbReference type="GO" id="GO:0044218">
    <property type="term" value="C:other organism cell membrane"/>
    <property type="evidence" value="ECO:0007669"/>
    <property type="project" value="UniProtKB-KW"/>
</dbReference>
<dbReference type="GO" id="GO:0042742">
    <property type="term" value="P:defense response to bacterium"/>
    <property type="evidence" value="ECO:0007669"/>
    <property type="project" value="UniProtKB-KW"/>
</dbReference>
<dbReference type="GO" id="GO:0045087">
    <property type="term" value="P:innate immune response"/>
    <property type="evidence" value="ECO:0007669"/>
    <property type="project" value="UniProtKB-KW"/>
</dbReference>
<comment type="function">
    <text evidence="1">Antibacterial peptide. Has activity against the Gram-positive bacterium S.aureus (MIC=64 uM) and the Gram-negative bacterium E.coli (MIC&gt;128 uM). Has no hemolytic activity (LC(50)&gt;300 uM).</text>
</comment>
<comment type="subcellular location">
    <subcellularLocation>
        <location evidence="1">Secreted</location>
    </subcellularLocation>
    <subcellularLocation>
        <location evidence="3">Target cell membrane</location>
    </subcellularLocation>
</comment>
<comment type="tissue specificity">
    <text evidence="4">Expressed by the skin glands.</text>
</comment>
<comment type="mass spectrometry"/>
<comment type="similarity">
    <text evidence="3">Belongs to the frog skin active peptide (FSAP) family. Temporin subfamily.</text>
</comment>